<sequence>MGKLENASWIHDSLMKYLNSTEEYLAYLCGPKRSDLSLPVSVVYALIFVVGVIGNLLVCLVIARHQTLKTPTNYYLFSLAVSDLLVLLLGMPLEVYELWHNYPFLFGPVGCYFKTALFETVCFASILSVTTVSIERYVAIVHPFRAKLESTRRRALRILSLVWSFSVVFSLPNTSIHGIKFQQFPNGSSVPGSATCTVTKPIWVYNFIIQATSFLFYILPMTLISVLYYLMGLRLKRDESLEADKVTVNIHRPSRKSVTKMLFVLVLVFAICWTPFHVDRLFFSFVDEWTESLAAVFNLIHVVSGVFFYLSSAVNPIIYNLLSRRFRAAFRNVVSPSCKWCHPQHRPQGPPAQKVIFLTECHLVELTEDAGPQFPCQSSIHNTQLTTVPCVEEVP</sequence>
<comment type="function">
    <text evidence="1 4">Receptor for the neuromedin-U and neuromedin-S neuropeptides.</text>
</comment>
<comment type="subcellular location">
    <subcellularLocation>
        <location>Cell membrane</location>
        <topology>Multi-pass membrane protein</topology>
    </subcellularLocation>
</comment>
<comment type="tissue specificity">
    <text evidence="4">Expressed primarily in brain tissues, more specifically in medulla and spinal cord. Widespread distribution in peripheral tissues.</text>
</comment>
<comment type="similarity">
    <text evidence="3">Belongs to the G-protein coupled receptor 1 family.</text>
</comment>
<reference key="1">
    <citation type="journal article" date="2002" name="Peptides">
        <title>Cloning and characterization of murine neuromedin U receptors.</title>
        <authorList>
            <person name="Funes S."/>
            <person name="Hedrick J.A."/>
            <person name="Yang S."/>
            <person name="Shan L."/>
            <person name="Bayne M."/>
            <person name="Monsma F.J. Jr."/>
            <person name="Gustafson E.L."/>
        </authorList>
    </citation>
    <scope>NUCLEOTIDE SEQUENCE [MRNA]</scope>
    <scope>FUNCTION</scope>
    <scope>TISSUE SPECIFICITY</scope>
    <source>
        <strain>C57BL/6J</strain>
    </source>
</reference>
<reference key="2">
    <citation type="journal article" date="2005" name="Science">
        <title>The transcriptional landscape of the mammalian genome.</title>
        <authorList>
            <person name="Carninci P."/>
            <person name="Kasukawa T."/>
            <person name="Katayama S."/>
            <person name="Gough J."/>
            <person name="Frith M.C."/>
            <person name="Maeda N."/>
            <person name="Oyama R."/>
            <person name="Ravasi T."/>
            <person name="Lenhard B."/>
            <person name="Wells C."/>
            <person name="Kodzius R."/>
            <person name="Shimokawa K."/>
            <person name="Bajic V.B."/>
            <person name="Brenner S.E."/>
            <person name="Batalov S."/>
            <person name="Forrest A.R."/>
            <person name="Zavolan M."/>
            <person name="Davis M.J."/>
            <person name="Wilming L.G."/>
            <person name="Aidinis V."/>
            <person name="Allen J.E."/>
            <person name="Ambesi-Impiombato A."/>
            <person name="Apweiler R."/>
            <person name="Aturaliya R.N."/>
            <person name="Bailey T.L."/>
            <person name="Bansal M."/>
            <person name="Baxter L."/>
            <person name="Beisel K.W."/>
            <person name="Bersano T."/>
            <person name="Bono H."/>
            <person name="Chalk A.M."/>
            <person name="Chiu K.P."/>
            <person name="Choudhary V."/>
            <person name="Christoffels A."/>
            <person name="Clutterbuck D.R."/>
            <person name="Crowe M.L."/>
            <person name="Dalla E."/>
            <person name="Dalrymple B.P."/>
            <person name="de Bono B."/>
            <person name="Della Gatta G."/>
            <person name="di Bernardo D."/>
            <person name="Down T."/>
            <person name="Engstrom P."/>
            <person name="Fagiolini M."/>
            <person name="Faulkner G."/>
            <person name="Fletcher C.F."/>
            <person name="Fukushima T."/>
            <person name="Furuno M."/>
            <person name="Futaki S."/>
            <person name="Gariboldi M."/>
            <person name="Georgii-Hemming P."/>
            <person name="Gingeras T.R."/>
            <person name="Gojobori T."/>
            <person name="Green R.E."/>
            <person name="Gustincich S."/>
            <person name="Harbers M."/>
            <person name="Hayashi Y."/>
            <person name="Hensch T.K."/>
            <person name="Hirokawa N."/>
            <person name="Hill D."/>
            <person name="Huminiecki L."/>
            <person name="Iacono M."/>
            <person name="Ikeo K."/>
            <person name="Iwama A."/>
            <person name="Ishikawa T."/>
            <person name="Jakt M."/>
            <person name="Kanapin A."/>
            <person name="Katoh M."/>
            <person name="Kawasawa Y."/>
            <person name="Kelso J."/>
            <person name="Kitamura H."/>
            <person name="Kitano H."/>
            <person name="Kollias G."/>
            <person name="Krishnan S.P."/>
            <person name="Kruger A."/>
            <person name="Kummerfeld S.K."/>
            <person name="Kurochkin I.V."/>
            <person name="Lareau L.F."/>
            <person name="Lazarevic D."/>
            <person name="Lipovich L."/>
            <person name="Liu J."/>
            <person name="Liuni S."/>
            <person name="McWilliam S."/>
            <person name="Madan Babu M."/>
            <person name="Madera M."/>
            <person name="Marchionni L."/>
            <person name="Matsuda H."/>
            <person name="Matsuzawa S."/>
            <person name="Miki H."/>
            <person name="Mignone F."/>
            <person name="Miyake S."/>
            <person name="Morris K."/>
            <person name="Mottagui-Tabar S."/>
            <person name="Mulder N."/>
            <person name="Nakano N."/>
            <person name="Nakauchi H."/>
            <person name="Ng P."/>
            <person name="Nilsson R."/>
            <person name="Nishiguchi S."/>
            <person name="Nishikawa S."/>
            <person name="Nori F."/>
            <person name="Ohara O."/>
            <person name="Okazaki Y."/>
            <person name="Orlando V."/>
            <person name="Pang K.C."/>
            <person name="Pavan W.J."/>
            <person name="Pavesi G."/>
            <person name="Pesole G."/>
            <person name="Petrovsky N."/>
            <person name="Piazza S."/>
            <person name="Reed J."/>
            <person name="Reid J.F."/>
            <person name="Ring B.Z."/>
            <person name="Ringwald M."/>
            <person name="Rost B."/>
            <person name="Ruan Y."/>
            <person name="Salzberg S.L."/>
            <person name="Sandelin A."/>
            <person name="Schneider C."/>
            <person name="Schoenbach C."/>
            <person name="Sekiguchi K."/>
            <person name="Semple C.A."/>
            <person name="Seno S."/>
            <person name="Sessa L."/>
            <person name="Sheng Y."/>
            <person name="Shibata Y."/>
            <person name="Shimada H."/>
            <person name="Shimada K."/>
            <person name="Silva D."/>
            <person name="Sinclair B."/>
            <person name="Sperling S."/>
            <person name="Stupka E."/>
            <person name="Sugiura K."/>
            <person name="Sultana R."/>
            <person name="Takenaka Y."/>
            <person name="Taki K."/>
            <person name="Tammoja K."/>
            <person name="Tan S.L."/>
            <person name="Tang S."/>
            <person name="Taylor M.S."/>
            <person name="Tegner J."/>
            <person name="Teichmann S.A."/>
            <person name="Ueda H.R."/>
            <person name="van Nimwegen E."/>
            <person name="Verardo R."/>
            <person name="Wei C.L."/>
            <person name="Yagi K."/>
            <person name="Yamanishi H."/>
            <person name="Zabarovsky E."/>
            <person name="Zhu S."/>
            <person name="Zimmer A."/>
            <person name="Hide W."/>
            <person name="Bult C."/>
            <person name="Grimmond S.M."/>
            <person name="Teasdale R.D."/>
            <person name="Liu E.T."/>
            <person name="Brusic V."/>
            <person name="Quackenbush J."/>
            <person name="Wahlestedt C."/>
            <person name="Mattick J.S."/>
            <person name="Hume D.A."/>
            <person name="Kai C."/>
            <person name="Sasaki D."/>
            <person name="Tomaru Y."/>
            <person name="Fukuda S."/>
            <person name="Kanamori-Katayama M."/>
            <person name="Suzuki M."/>
            <person name="Aoki J."/>
            <person name="Arakawa T."/>
            <person name="Iida J."/>
            <person name="Imamura K."/>
            <person name="Itoh M."/>
            <person name="Kato T."/>
            <person name="Kawaji H."/>
            <person name="Kawagashira N."/>
            <person name="Kawashima T."/>
            <person name="Kojima M."/>
            <person name="Kondo S."/>
            <person name="Konno H."/>
            <person name="Nakano K."/>
            <person name="Ninomiya N."/>
            <person name="Nishio T."/>
            <person name="Okada M."/>
            <person name="Plessy C."/>
            <person name="Shibata K."/>
            <person name="Shiraki T."/>
            <person name="Suzuki S."/>
            <person name="Tagami M."/>
            <person name="Waki K."/>
            <person name="Watahiki A."/>
            <person name="Okamura-Oho Y."/>
            <person name="Suzuki H."/>
            <person name="Kawai J."/>
            <person name="Hayashizaki Y."/>
        </authorList>
    </citation>
    <scope>NUCLEOTIDE SEQUENCE [LARGE SCALE MRNA]</scope>
    <source>
        <strain>C57BL/6J</strain>
        <tissue>Vagina</tissue>
    </source>
</reference>
<reference key="3">
    <citation type="journal article" date="2009" name="PLoS Biol.">
        <title>Lineage-specific biology revealed by a finished genome assembly of the mouse.</title>
        <authorList>
            <person name="Church D.M."/>
            <person name="Goodstadt L."/>
            <person name="Hillier L.W."/>
            <person name="Zody M.C."/>
            <person name="Goldstein S."/>
            <person name="She X."/>
            <person name="Bult C.J."/>
            <person name="Agarwala R."/>
            <person name="Cherry J.L."/>
            <person name="DiCuccio M."/>
            <person name="Hlavina W."/>
            <person name="Kapustin Y."/>
            <person name="Meric P."/>
            <person name="Maglott D."/>
            <person name="Birtle Z."/>
            <person name="Marques A.C."/>
            <person name="Graves T."/>
            <person name="Zhou S."/>
            <person name="Teague B."/>
            <person name="Potamousis K."/>
            <person name="Churas C."/>
            <person name="Place M."/>
            <person name="Herschleb J."/>
            <person name="Runnheim R."/>
            <person name="Forrest D."/>
            <person name="Amos-Landgraf J."/>
            <person name="Schwartz D.C."/>
            <person name="Cheng Z."/>
            <person name="Lindblad-Toh K."/>
            <person name="Eichler E.E."/>
            <person name="Ponting C.P."/>
        </authorList>
    </citation>
    <scope>NUCLEOTIDE SEQUENCE [LARGE SCALE GENOMIC DNA]</scope>
    <source>
        <strain>C57BL/6J</strain>
    </source>
</reference>
<proteinExistence type="evidence at transcript level"/>
<feature type="chain" id="PRO_0000069911" description="Neuromedin-U receptor 2">
    <location>
        <begin position="1"/>
        <end position="395"/>
    </location>
</feature>
<feature type="topological domain" description="Extracellular" evidence="2">
    <location>
        <begin position="1"/>
        <end position="41"/>
    </location>
</feature>
<feature type="transmembrane region" description="Helical; Name=1" evidence="2">
    <location>
        <begin position="42"/>
        <end position="62"/>
    </location>
</feature>
<feature type="topological domain" description="Cytoplasmic" evidence="2">
    <location>
        <begin position="63"/>
        <end position="74"/>
    </location>
</feature>
<feature type="transmembrane region" description="Helical; Name=2" evidence="2">
    <location>
        <begin position="75"/>
        <end position="95"/>
    </location>
</feature>
<feature type="topological domain" description="Extracellular" evidence="2">
    <location>
        <begin position="96"/>
        <end position="115"/>
    </location>
</feature>
<feature type="transmembrane region" description="Helical; Name=3" evidence="2">
    <location>
        <begin position="116"/>
        <end position="138"/>
    </location>
</feature>
<feature type="topological domain" description="Cytoplasmic" evidence="2">
    <location>
        <begin position="139"/>
        <end position="157"/>
    </location>
</feature>
<feature type="transmembrane region" description="Helical; Name=4" evidence="2">
    <location>
        <begin position="158"/>
        <end position="178"/>
    </location>
</feature>
<feature type="topological domain" description="Extracellular" evidence="2">
    <location>
        <begin position="179"/>
        <end position="212"/>
    </location>
</feature>
<feature type="transmembrane region" description="Helical; Name=5" evidence="2">
    <location>
        <begin position="213"/>
        <end position="233"/>
    </location>
</feature>
<feature type="topological domain" description="Cytoplasmic" evidence="2">
    <location>
        <begin position="234"/>
        <end position="257"/>
    </location>
</feature>
<feature type="transmembrane region" description="Helical; Name=6" evidence="2">
    <location>
        <begin position="258"/>
        <end position="278"/>
    </location>
</feature>
<feature type="topological domain" description="Extracellular" evidence="2">
    <location>
        <begin position="279"/>
        <end position="293"/>
    </location>
</feature>
<feature type="transmembrane region" description="Helical; Name=7" evidence="2">
    <location>
        <begin position="294"/>
        <end position="314"/>
    </location>
</feature>
<feature type="topological domain" description="Cytoplasmic" evidence="2">
    <location>
        <begin position="315"/>
        <end position="395"/>
    </location>
</feature>
<feature type="glycosylation site" description="N-linked (GlcNAc...) asparagine" evidence="2">
    <location>
        <position position="6"/>
    </location>
</feature>
<feature type="glycosylation site" description="N-linked (GlcNAc...) asparagine" evidence="2">
    <location>
        <position position="19"/>
    </location>
</feature>
<feature type="glycosylation site" description="N-linked (GlcNAc...) asparagine" evidence="2">
    <location>
        <position position="186"/>
    </location>
</feature>
<feature type="disulfide bond" evidence="3">
    <location>
        <begin position="111"/>
        <end position="196"/>
    </location>
</feature>
<feature type="sequence conflict" description="In Ref. 1; AAL26695." evidence="5" ref="1">
    <original>I</original>
    <variation>M</variation>
    <location>
        <position position="202"/>
    </location>
</feature>
<keyword id="KW-1003">Cell membrane</keyword>
<keyword id="KW-1015">Disulfide bond</keyword>
<keyword id="KW-0297">G-protein coupled receptor</keyword>
<keyword id="KW-0325">Glycoprotein</keyword>
<keyword id="KW-0472">Membrane</keyword>
<keyword id="KW-0675">Receptor</keyword>
<keyword id="KW-1185">Reference proteome</keyword>
<keyword id="KW-0807">Transducer</keyword>
<keyword id="KW-0812">Transmembrane</keyword>
<keyword id="KW-1133">Transmembrane helix</keyword>
<accession>Q8BZ39</accession>
<accession>Q91Z76</accession>
<name>NMUR2_MOUSE</name>
<evidence type="ECO:0000250" key="1"/>
<evidence type="ECO:0000255" key="2"/>
<evidence type="ECO:0000255" key="3">
    <source>
        <dbReference type="PROSITE-ProRule" id="PRU00521"/>
    </source>
</evidence>
<evidence type="ECO:0000269" key="4">
    <source>
    </source>
</evidence>
<evidence type="ECO:0000305" key="5"/>
<dbReference type="EMBL" id="AY057384">
    <property type="protein sequence ID" value="AAL26695.1"/>
    <property type="molecule type" value="mRNA"/>
</dbReference>
<dbReference type="EMBL" id="AK036756">
    <property type="protein sequence ID" value="BAC29564.1"/>
    <property type="molecule type" value="mRNA"/>
</dbReference>
<dbReference type="EMBL" id="AL671969">
    <property type="status" value="NOT_ANNOTATED_CDS"/>
    <property type="molecule type" value="Genomic_DNA"/>
</dbReference>
<dbReference type="CCDS" id="CCDS24716.1"/>
<dbReference type="RefSeq" id="NP_694719.2">
    <property type="nucleotide sequence ID" value="NM_153079.4"/>
</dbReference>
<dbReference type="SMR" id="Q8BZ39"/>
<dbReference type="BioGRID" id="229778">
    <property type="interactions" value="1"/>
</dbReference>
<dbReference type="CORUM" id="Q8BZ39"/>
<dbReference type="FunCoup" id="Q8BZ39">
    <property type="interactions" value="1110"/>
</dbReference>
<dbReference type="STRING" id="10090.ENSMUSP00000044718"/>
<dbReference type="BindingDB" id="Q8BZ39"/>
<dbReference type="ChEMBL" id="CHEMBL3351217"/>
<dbReference type="GlyCosmos" id="Q8BZ39">
    <property type="glycosylation" value="3 sites, No reported glycans"/>
</dbReference>
<dbReference type="GlyGen" id="Q8BZ39">
    <property type="glycosylation" value="3 sites"/>
</dbReference>
<dbReference type="PhosphoSitePlus" id="Q8BZ39"/>
<dbReference type="PaxDb" id="10090-ENSMUSP00000044718"/>
<dbReference type="ProteomicsDB" id="252974"/>
<dbReference type="Antibodypedia" id="16394">
    <property type="antibodies" value="190 antibodies from 29 providers"/>
</dbReference>
<dbReference type="DNASU" id="216749"/>
<dbReference type="Ensembl" id="ENSMUST00000037682.3">
    <property type="protein sequence ID" value="ENSMUSP00000044718.3"/>
    <property type="gene ID" value="ENSMUSG00000037393.3"/>
</dbReference>
<dbReference type="GeneID" id="216749"/>
<dbReference type="KEGG" id="mmu:216749"/>
<dbReference type="UCSC" id="uc007izq.1">
    <property type="organism name" value="mouse"/>
</dbReference>
<dbReference type="AGR" id="MGI:2441765"/>
<dbReference type="CTD" id="56923"/>
<dbReference type="MGI" id="MGI:2441765">
    <property type="gene designation" value="Nmur2"/>
</dbReference>
<dbReference type="VEuPathDB" id="HostDB:ENSMUSG00000037393"/>
<dbReference type="eggNOG" id="KOG3656">
    <property type="taxonomic scope" value="Eukaryota"/>
</dbReference>
<dbReference type="GeneTree" id="ENSGT01120000271823"/>
<dbReference type="HOGENOM" id="CLU_009579_6_5_1"/>
<dbReference type="InParanoid" id="Q8BZ39"/>
<dbReference type="OMA" id="FSFVVEW"/>
<dbReference type="OrthoDB" id="5950040at2759"/>
<dbReference type="PhylomeDB" id="Q8BZ39"/>
<dbReference type="TreeFam" id="TF318522"/>
<dbReference type="Reactome" id="R-MMU-375276">
    <property type="pathway name" value="Peptide ligand-binding receptors"/>
</dbReference>
<dbReference type="Reactome" id="R-MMU-416476">
    <property type="pathway name" value="G alpha (q) signalling events"/>
</dbReference>
<dbReference type="Reactome" id="R-MMU-418594">
    <property type="pathway name" value="G alpha (i) signalling events"/>
</dbReference>
<dbReference type="BioGRID-ORCS" id="216749">
    <property type="hits" value="3 hits in 76 CRISPR screens"/>
</dbReference>
<dbReference type="PRO" id="PR:Q8BZ39"/>
<dbReference type="Proteomes" id="UP000000589">
    <property type="component" value="Chromosome 11"/>
</dbReference>
<dbReference type="RNAct" id="Q8BZ39">
    <property type="molecule type" value="protein"/>
</dbReference>
<dbReference type="Bgee" id="ENSMUSG00000037393">
    <property type="expression patterns" value="Expressed in epiblast cell in embryo and 7 other cell types or tissues"/>
</dbReference>
<dbReference type="GO" id="GO:0016020">
    <property type="term" value="C:membrane"/>
    <property type="evidence" value="ECO:0000305"/>
    <property type="project" value="MGI"/>
</dbReference>
<dbReference type="GO" id="GO:0005886">
    <property type="term" value="C:plasma membrane"/>
    <property type="evidence" value="ECO:0007669"/>
    <property type="project" value="UniProtKB-SubCell"/>
</dbReference>
<dbReference type="GO" id="GO:0005525">
    <property type="term" value="F:GTP binding"/>
    <property type="evidence" value="ECO:0007669"/>
    <property type="project" value="Ensembl"/>
</dbReference>
<dbReference type="GO" id="GO:0005229">
    <property type="term" value="F:intracellularly calcium-gated chloride channel activity"/>
    <property type="evidence" value="ECO:0007669"/>
    <property type="project" value="Ensembl"/>
</dbReference>
<dbReference type="GO" id="GO:0042924">
    <property type="term" value="F:neuromedin U binding"/>
    <property type="evidence" value="ECO:0007669"/>
    <property type="project" value="Ensembl"/>
</dbReference>
<dbReference type="GO" id="GO:0001607">
    <property type="term" value="F:neuromedin U receptor activity"/>
    <property type="evidence" value="ECO:0007669"/>
    <property type="project" value="Ensembl"/>
</dbReference>
<dbReference type="GO" id="GO:0008188">
    <property type="term" value="F:neuropeptide receptor activity"/>
    <property type="evidence" value="ECO:0000353"/>
    <property type="project" value="MGI"/>
</dbReference>
<dbReference type="GO" id="GO:0050482">
    <property type="term" value="P:arachidonate secretion"/>
    <property type="evidence" value="ECO:0007669"/>
    <property type="project" value="Ensembl"/>
</dbReference>
<dbReference type="GO" id="GO:0007625">
    <property type="term" value="P:grooming behavior"/>
    <property type="evidence" value="ECO:0000315"/>
    <property type="project" value="MGI"/>
</dbReference>
<dbReference type="GO" id="GO:0007218">
    <property type="term" value="P:neuropeptide signaling pathway"/>
    <property type="evidence" value="ECO:0000314"/>
    <property type="project" value="MGI"/>
</dbReference>
<dbReference type="GO" id="GO:0007200">
    <property type="term" value="P:phospholipase C-activating G protein-coupled receptor signaling pathway"/>
    <property type="evidence" value="ECO:0007669"/>
    <property type="project" value="Ensembl"/>
</dbReference>
<dbReference type="GO" id="GO:0002023">
    <property type="term" value="P:reduction of food intake in response to dietary excess"/>
    <property type="evidence" value="ECO:0000315"/>
    <property type="project" value="MGI"/>
</dbReference>
<dbReference type="GO" id="GO:0048265">
    <property type="term" value="P:response to pain"/>
    <property type="evidence" value="ECO:0000315"/>
    <property type="project" value="MGI"/>
</dbReference>
<dbReference type="FunFam" id="1.20.1070.10:FF:000214">
    <property type="entry name" value="Neuromedin U receptor 1"/>
    <property type="match status" value="1"/>
</dbReference>
<dbReference type="Gene3D" id="1.20.1070.10">
    <property type="entry name" value="Rhodopsin 7-helix transmembrane proteins"/>
    <property type="match status" value="1"/>
</dbReference>
<dbReference type="InterPro" id="IPR000276">
    <property type="entry name" value="GPCR_Rhodpsn"/>
</dbReference>
<dbReference type="InterPro" id="IPR017452">
    <property type="entry name" value="GPCR_Rhodpsn_7TM"/>
</dbReference>
<dbReference type="InterPro" id="IPR005390">
    <property type="entry name" value="NeuromedU_rcpt"/>
</dbReference>
<dbReference type="InterPro" id="IPR005392">
    <property type="entry name" value="NeuromedU_rcpt_2"/>
</dbReference>
<dbReference type="InterPro" id="IPR045561">
    <property type="entry name" value="NMU-R2_C"/>
</dbReference>
<dbReference type="PANTHER" id="PTHR24243">
    <property type="entry name" value="G-PROTEIN COUPLED RECEPTOR"/>
    <property type="match status" value="1"/>
</dbReference>
<dbReference type="PANTHER" id="PTHR24243:SF14">
    <property type="entry name" value="NEUROMEDIN-U RECEPTOR 2"/>
    <property type="match status" value="1"/>
</dbReference>
<dbReference type="Pfam" id="PF00001">
    <property type="entry name" value="7tm_1"/>
    <property type="match status" value="1"/>
</dbReference>
<dbReference type="Pfam" id="PF19285">
    <property type="entry name" value="NmU-R2_C_term"/>
    <property type="match status" value="1"/>
</dbReference>
<dbReference type="PRINTS" id="PR00237">
    <property type="entry name" value="GPCRRHODOPSN"/>
</dbReference>
<dbReference type="PRINTS" id="PR01565">
    <property type="entry name" value="NEUROMEDINUR"/>
</dbReference>
<dbReference type="PRINTS" id="PR01567">
    <property type="entry name" value="NEUROMEDNU2R"/>
</dbReference>
<dbReference type="SMART" id="SM01381">
    <property type="entry name" value="7TM_GPCR_Srsx"/>
    <property type="match status" value="1"/>
</dbReference>
<dbReference type="SUPFAM" id="SSF81321">
    <property type="entry name" value="Family A G protein-coupled receptor-like"/>
    <property type="match status" value="1"/>
</dbReference>
<dbReference type="PROSITE" id="PS00237">
    <property type="entry name" value="G_PROTEIN_RECEP_F1_1"/>
    <property type="match status" value="1"/>
</dbReference>
<dbReference type="PROSITE" id="PS50262">
    <property type="entry name" value="G_PROTEIN_RECEP_F1_2"/>
    <property type="match status" value="1"/>
</dbReference>
<gene>
    <name type="primary">Nmur2</name>
</gene>
<organism>
    <name type="scientific">Mus musculus</name>
    <name type="common">Mouse</name>
    <dbReference type="NCBI Taxonomy" id="10090"/>
    <lineage>
        <taxon>Eukaryota</taxon>
        <taxon>Metazoa</taxon>
        <taxon>Chordata</taxon>
        <taxon>Craniata</taxon>
        <taxon>Vertebrata</taxon>
        <taxon>Euteleostomi</taxon>
        <taxon>Mammalia</taxon>
        <taxon>Eutheria</taxon>
        <taxon>Euarchontoglires</taxon>
        <taxon>Glires</taxon>
        <taxon>Rodentia</taxon>
        <taxon>Myomorpha</taxon>
        <taxon>Muroidea</taxon>
        <taxon>Muridae</taxon>
        <taxon>Murinae</taxon>
        <taxon>Mus</taxon>
        <taxon>Mus</taxon>
    </lineage>
</organism>
<protein>
    <recommendedName>
        <fullName>Neuromedin-U receptor 2</fullName>
        <shortName>NMU-R2</shortName>
    </recommendedName>
</protein>